<organism>
    <name type="scientific">Amborella trichopoda</name>
    <dbReference type="NCBI Taxonomy" id="13333"/>
    <lineage>
        <taxon>Eukaryota</taxon>
        <taxon>Viridiplantae</taxon>
        <taxon>Streptophyta</taxon>
        <taxon>Embryophyta</taxon>
        <taxon>Tracheophyta</taxon>
        <taxon>Spermatophyta</taxon>
        <taxon>Magnoliopsida</taxon>
        <taxon>Amborellales</taxon>
        <taxon>Amborellaceae</taxon>
        <taxon>Amborella</taxon>
    </lineage>
</organism>
<geneLocation type="chloroplast"/>
<gene>
    <name evidence="1" type="primary">ycf2-A</name>
</gene>
<gene>
    <name evidence="1" type="primary">ycf2-B</name>
</gene>
<accession>P61241</accession>
<reference key="1">
    <citation type="journal article" date="2003" name="Mol. Biol. Evol.">
        <title>Analysis of the Amborella trichopoda chloroplast genome sequence suggests that Amborella is not a basal angiosperm.</title>
        <authorList>
            <person name="Goremykin V.V."/>
            <person name="Hirsch-Ernst K.I."/>
            <person name="Wolfl S."/>
            <person name="Hellwig F.H."/>
        </authorList>
    </citation>
    <scope>NUCLEOTIDE SEQUENCE [LARGE SCALE GENOMIC DNA]</scope>
</reference>
<evidence type="ECO:0000255" key="1">
    <source>
        <dbReference type="HAMAP-Rule" id="MF_01330"/>
    </source>
</evidence>
<sequence>MKGHQLKSWIFELREILREIKNSHYFLDSWTKLNLVGSFTHIFFHQERFMKLFDPRIWSILLSCDSQSSTSNRYFTIKGVVLLVVAVLIYRINNRNMVERKNLYLMRLLPIPMNSIGPRNDTLEESFLSSNINRLIVSLLYLPKGKKISESCFMDPKESTWLLPITKKCIMPESNWGSRWWRNRIGKKRDSSCKISNETVAGIEISFKEKDIKYLEFLFVSYTDTDDPIRKDHDLELFDRLSPGKKQNIINLNSGQLFEILVKHLICYLMSAFREKRPIEVEGFFKQQGAEATIQSNDIEHVPRLFSGNKNKWGISLQNCAQFHMWQFHQDLFVSWGKNQHESDFLRNVSRENLIWLGSMWLVNKDRFFSKVRNVSSNIQYDSTRSIFVKVTDSSQLKGSSDQSRDHFNSISNEDSEYHTLIHQTEIEQLKERSILWDPSFLQTERTEIESDRFPKCLSGYFSMSRLFTEREKQMNNHLFPEEIEEFIGNPTRSIRSFFSDRWSELHLGSNATERSTRDQKLLKKQQDVSFVPSRRSENKEMVDIFKIITYLQNTVSIHPISSDPGCDMVPKDEPDMDSSNKISFLNKNPFCDLFHLFHGRNKGGYTLHHDFESEERFQERADLFTLSITEPDLMYHKGFAFSIDSYGLDQKKLLNEVFNSRDESKKKSLLVLPHIFYEENESFYRRIRTKSVRISCRNGLEDPKIVVFASNNIMEAVNQYRLIRNLIQIQYSTYGYIRNVSKRFFLMNRSDRNFEYGIQRDQIGNDTLNHITIMKYTINQHLSNLKKSQKKWFDPLISRTERSMNRDPNAYRYKWSNGSKNFQEHLEHFVSEQKNRFQVVFDRLRINQHSIDWSEVIDKQDLSKSLRFFLSKSLLFLSKSLPFFFVSIGNIPIHRSEIHIYELKGPNDQLCNQLLESIGVQIVHLNKLKPFLLDDHDTSQRSKLLINGGTIARFWFNKIPKWMIDSFHTRNNRGKSFENTDSYFSMISHDRDNWLNPVKPFHRSSLISSFYKANQLRFLNNPHHFWFYCNKRFPFYAEKTRINNYDLTYGQFLNISFIRNKIFSLCVGKKKHVFLERDTISPSPIESQVSDIFIPNDFPQSGDETYNLYKSFHFPTRSDPFVRRAIYSIADISGTPLTEEQRVNFEGTYCQPLSDLNLSDSEGKNLHQYLSFNSNMGLIHTPCSEKYLPSGKRKKRNLCLNKCVEKRQMYRTFQRDSAFSNISKWNLFQTYMPWFLTSTGCKYINFILLDTFSDPLPILSSSHKFVSIFHDIMHGSAWSIPQKKLRAILPQWNLISEISSKCLQNLLLSEEMIHRNNESPVPLIWTHLRSPNPREFFYSSLFLLLVAGYLVRTHLLFVSRVSSELHTELEKIKSLMIPSYMMELRKLLDSYPPPELNSFWLKNLFLVALEQLGDSPEEIRGSDSGGNMLLGGGPAYGVKSIRSKKKDLNINLIDIIDLISIIPNPVNPITFSINTRRLSRTSKEIYSLIRKRKNVNSDWIDGKIESWVANSDLIDDEEREFLVQFSALTTEKRIDQILWSLTHSDPFSKNDSGYQMIEQPGSIYLRYLVDIHKKYLMNSEFNRSCLAERRIFLAHYQTITYSQTSCGANSSHFPSHGKPFSLRLDLSPSRGILVIGSIGTGRSYLVKYLATNSYLPSITVSPNKFLDDKPKGYLIDDIDDSDDIDLDDSNSIDDSDDVDIGDSDDIDIDDDLDAELLTMTNVLTMYMTPKMDRFDITPQLELAKAMSPCIIWIPNIHDLYVNESNYLSLGLLVNHLSRDCERCSTRNILVIASTHIPQKVDPALIAPNKSNTCIKIRRLLIPQQRKHFFILSYTRGFHLEKKMFHTNGFGSITMGSNARDLVALTNEALSISITQKKSIIDTNTIRSALHRQTWDLRSQVRSVQDHGILFYQIGRSFAQNVLLSNCSIDPISTYMKKKSCKEGDSYLYKWYFELGTSIKKLTTLLYLLSCSAGSVAQDLWSPPGPDEKNWITSYGFVENDSDLVHGLLEGALVGSSRTEKDCSQFDNDRVTLLLRSEPRNPLDMMQNGSCSIVDQRFLYEKYESEFEEGEGEGTLDPQQIEEDLFNHIVWAPRIWRPCGNLFDCIERPNESRFPYRSRSFRGKQIISHKEDELQENDLEFLQSGTMQYQTRDRSSKEQGFFQISQFIWDPADPFFFLFKDQPFVSVFARREFFADEEMSKGLITSQTHSPTSIYERWLIKNTQEKHFELLIHRQRWLSTNSSLSNGSFRSNTPSESYQYLSNLFLSNGTLLDQMAKTLLRKRWLFPDEMKHLIHVTGERFPIP</sequence>
<proteinExistence type="inferred from homology"/>
<protein>
    <recommendedName>
        <fullName evidence="1">Protein Ycf2</fullName>
    </recommendedName>
</protein>
<comment type="function">
    <text>Probable ATPase of unknown function. Its presence in a non-photosynthetic plant (Epifagus virginiana) and experiments in tobacco indicate that it has an essential function which is probably not related to photosynthesis.</text>
</comment>
<comment type="subcellular location">
    <subcellularLocation>
        <location evidence="1">Plastid</location>
        <location evidence="1">Chloroplast stroma</location>
    </subcellularLocation>
</comment>
<comment type="similarity">
    <text evidence="1">Belongs to the Ycf2 family.</text>
</comment>
<dbReference type="EMBL" id="AJ506156">
    <property type="protein sequence ID" value="CAD45149.1"/>
    <property type="molecule type" value="Genomic_DNA"/>
</dbReference>
<dbReference type="EMBL" id="AJ506156">
    <property type="protein sequence ID" value="CAD45168.1"/>
    <property type="molecule type" value="Genomic_DNA"/>
</dbReference>
<dbReference type="STRING" id="13333.P61241"/>
<dbReference type="KEGG" id="atr:2546545"/>
<dbReference type="KEGG" id="atr:2546546"/>
<dbReference type="eggNOG" id="ENOG502QRDV">
    <property type="taxonomic scope" value="Eukaryota"/>
</dbReference>
<dbReference type="OrthoDB" id="1852053at2759"/>
<dbReference type="Proteomes" id="UP000017836">
    <property type="component" value="Chloroplast"/>
</dbReference>
<dbReference type="GO" id="GO:0009570">
    <property type="term" value="C:chloroplast stroma"/>
    <property type="evidence" value="ECO:0007669"/>
    <property type="project" value="UniProtKB-SubCell"/>
</dbReference>
<dbReference type="GO" id="GO:0005524">
    <property type="term" value="F:ATP binding"/>
    <property type="evidence" value="ECO:0007669"/>
    <property type="project" value="UniProtKB-KW"/>
</dbReference>
<dbReference type="GO" id="GO:0016887">
    <property type="term" value="F:ATP hydrolysis activity"/>
    <property type="evidence" value="ECO:0007669"/>
    <property type="project" value="InterPro"/>
</dbReference>
<dbReference type="CDD" id="cd19505">
    <property type="entry name" value="RecA-like_Ycf2"/>
    <property type="match status" value="1"/>
</dbReference>
<dbReference type="Gene3D" id="3.40.50.300">
    <property type="entry name" value="P-loop containing nucleotide triphosphate hydrolases"/>
    <property type="match status" value="1"/>
</dbReference>
<dbReference type="HAMAP" id="MF_01330">
    <property type="entry name" value="Ycf2"/>
    <property type="match status" value="1"/>
</dbReference>
<dbReference type="InterPro" id="IPR003593">
    <property type="entry name" value="AAA+_ATPase"/>
</dbReference>
<dbReference type="InterPro" id="IPR003959">
    <property type="entry name" value="ATPase_AAA_core"/>
</dbReference>
<dbReference type="InterPro" id="IPR027417">
    <property type="entry name" value="P-loop_NTPase"/>
</dbReference>
<dbReference type="InterPro" id="IPR008543">
    <property type="entry name" value="Uncharacterised_Ycf2"/>
</dbReference>
<dbReference type="InterPro" id="IPR056777">
    <property type="entry name" value="Ycf2_N"/>
</dbReference>
<dbReference type="PANTHER" id="PTHR33078:SF92">
    <property type="entry name" value="PROTEIN YCF2"/>
    <property type="match status" value="1"/>
</dbReference>
<dbReference type="PANTHER" id="PTHR33078">
    <property type="entry name" value="PROTEIN YCF2-RELATED"/>
    <property type="match status" value="1"/>
</dbReference>
<dbReference type="Pfam" id="PF00004">
    <property type="entry name" value="AAA"/>
    <property type="match status" value="1"/>
</dbReference>
<dbReference type="Pfam" id="PF05695">
    <property type="entry name" value="Ycf2"/>
    <property type="match status" value="1"/>
</dbReference>
<dbReference type="SMART" id="SM00382">
    <property type="entry name" value="AAA"/>
    <property type="match status" value="1"/>
</dbReference>
<dbReference type="SUPFAM" id="SSF52540">
    <property type="entry name" value="P-loop containing nucleoside triphosphate hydrolases"/>
    <property type="match status" value="1"/>
</dbReference>
<feature type="chain" id="PRO_0000223047" description="Protein Ycf2">
    <location>
        <begin position="1"/>
        <end position="2304"/>
    </location>
</feature>
<feature type="binding site" evidence="1">
    <location>
        <begin position="1637"/>
        <end position="1644"/>
    </location>
    <ligand>
        <name>ATP</name>
        <dbReference type="ChEBI" id="CHEBI:30616"/>
    </ligand>
</feature>
<name>YCF2_AMBTC</name>
<keyword id="KW-0067">ATP-binding</keyword>
<keyword id="KW-0150">Chloroplast</keyword>
<keyword id="KW-0547">Nucleotide-binding</keyword>
<keyword id="KW-0934">Plastid</keyword>
<keyword id="KW-1185">Reference proteome</keyword>